<protein>
    <recommendedName>
        <fullName>Putative sugar uptake protein lin0444</fullName>
    </recommendedName>
</protein>
<comment type="subcellular location">
    <subcellularLocation>
        <location evidence="2">Cell membrane</location>
        <topology evidence="2">Multi-pass membrane protein</topology>
    </subcellularLocation>
</comment>
<comment type="similarity">
    <text evidence="2">Belongs to the GRP transporter (TC 2.A.7.5) family.</text>
</comment>
<proteinExistence type="inferred from homology"/>
<feature type="chain" id="PRO_0000213657" description="Putative sugar uptake protein lin0444">
    <location>
        <begin position="1"/>
        <end position="285"/>
    </location>
</feature>
<feature type="transmembrane region" description="Helical" evidence="1">
    <location>
        <begin position="2"/>
        <end position="21"/>
    </location>
</feature>
<feature type="transmembrane region" description="Helical" evidence="1">
    <location>
        <begin position="31"/>
        <end position="50"/>
    </location>
</feature>
<feature type="transmembrane region" description="Helical" evidence="1">
    <location>
        <begin position="55"/>
        <end position="77"/>
    </location>
</feature>
<feature type="transmembrane region" description="Helical" evidence="1">
    <location>
        <begin position="111"/>
        <end position="133"/>
    </location>
</feature>
<feature type="transmembrane region" description="Helical" evidence="1">
    <location>
        <begin position="146"/>
        <end position="168"/>
    </location>
</feature>
<feature type="transmembrane region" description="Helical" evidence="1">
    <location>
        <begin position="172"/>
        <end position="194"/>
    </location>
</feature>
<feature type="transmembrane region" description="Helical" evidence="1">
    <location>
        <begin position="207"/>
        <end position="229"/>
    </location>
</feature>
<feature type="transmembrane region" description="Helical" evidence="1">
    <location>
        <begin position="233"/>
        <end position="255"/>
    </location>
</feature>
<feature type="transmembrane region" description="Helical" evidence="1">
    <location>
        <begin position="262"/>
        <end position="284"/>
    </location>
</feature>
<dbReference type="EMBL" id="AL596164">
    <property type="protein sequence ID" value="CAC95677.1"/>
    <property type="molecule type" value="Genomic_DNA"/>
</dbReference>
<dbReference type="PIR" id="AE1488">
    <property type="entry name" value="AE1488"/>
</dbReference>
<dbReference type="RefSeq" id="WP_010990414.1">
    <property type="nucleotide sequence ID" value="NC_003212.1"/>
</dbReference>
<dbReference type="SMR" id="Q92EL4"/>
<dbReference type="STRING" id="272626.gene:17564771"/>
<dbReference type="KEGG" id="lin:lin0444"/>
<dbReference type="eggNOG" id="COG4975">
    <property type="taxonomic scope" value="Bacteria"/>
</dbReference>
<dbReference type="HOGENOM" id="CLU_076024_0_0_9"/>
<dbReference type="OrthoDB" id="1452595at2"/>
<dbReference type="Proteomes" id="UP000002513">
    <property type="component" value="Chromosome"/>
</dbReference>
<dbReference type="GO" id="GO:0005886">
    <property type="term" value="C:plasma membrane"/>
    <property type="evidence" value="ECO:0007669"/>
    <property type="project" value="UniProtKB-SubCell"/>
</dbReference>
<dbReference type="GO" id="GO:0015144">
    <property type="term" value="F:carbohydrate transmembrane transporter activity"/>
    <property type="evidence" value="ECO:0007669"/>
    <property type="project" value="InterPro"/>
</dbReference>
<dbReference type="CDD" id="cd23110">
    <property type="entry name" value="GRP"/>
    <property type="match status" value="1"/>
</dbReference>
<dbReference type="InterPro" id="IPR010651">
    <property type="entry name" value="Sugar_transport"/>
</dbReference>
<dbReference type="PANTHER" id="PTHR16119">
    <property type="entry name" value="TRANSMEMBRANE PROTEIN 144"/>
    <property type="match status" value="1"/>
</dbReference>
<dbReference type="PANTHER" id="PTHR16119:SF17">
    <property type="entry name" value="TRANSMEMBRANE PROTEIN 144"/>
    <property type="match status" value="1"/>
</dbReference>
<dbReference type="Pfam" id="PF06800">
    <property type="entry name" value="Sugar_transport"/>
    <property type="match status" value="1"/>
</dbReference>
<dbReference type="SUPFAM" id="SSF103481">
    <property type="entry name" value="Multidrug resistance efflux transporter EmrE"/>
    <property type="match status" value="2"/>
</dbReference>
<accession>Q92EL4</accession>
<sequence length="285" mass="30721">MSIYLIALLPVLGWGFMPIIANLRKSTPEEQLLGTSISALLFAFILFWILSPEITVLSFIVSFVSGIFWSFGQLLQFKGIAASSVAKAMPISNGTQLVGATLFAVLVFQEWQTVTAVIIGVVAVILILIGVVMTGFQKRGNHITESVSFHVYGIVILSSFFLTLYVVTNQLFDVTGFSIILPQAIGMLTCAIGINLAKKTAISRKNVTFNLMTGLSWSIANLGMFLATAVLGVATSFSISQACVIVATIGGILIFKQKKSPLEWTFILSGILLIMVGVVFLSLLK</sequence>
<reference key="1">
    <citation type="journal article" date="2001" name="Science">
        <title>Comparative genomics of Listeria species.</title>
        <authorList>
            <person name="Glaser P."/>
            <person name="Frangeul L."/>
            <person name="Buchrieser C."/>
            <person name="Rusniok C."/>
            <person name="Amend A."/>
            <person name="Baquero F."/>
            <person name="Berche P."/>
            <person name="Bloecker H."/>
            <person name="Brandt P."/>
            <person name="Chakraborty T."/>
            <person name="Charbit A."/>
            <person name="Chetouani F."/>
            <person name="Couve E."/>
            <person name="de Daruvar A."/>
            <person name="Dehoux P."/>
            <person name="Domann E."/>
            <person name="Dominguez-Bernal G."/>
            <person name="Duchaud E."/>
            <person name="Durant L."/>
            <person name="Dussurget O."/>
            <person name="Entian K.-D."/>
            <person name="Fsihi H."/>
            <person name="Garcia-del Portillo F."/>
            <person name="Garrido P."/>
            <person name="Gautier L."/>
            <person name="Goebel W."/>
            <person name="Gomez-Lopez N."/>
            <person name="Hain T."/>
            <person name="Hauf J."/>
            <person name="Jackson D."/>
            <person name="Jones L.-M."/>
            <person name="Kaerst U."/>
            <person name="Kreft J."/>
            <person name="Kuhn M."/>
            <person name="Kunst F."/>
            <person name="Kurapkat G."/>
            <person name="Madueno E."/>
            <person name="Maitournam A."/>
            <person name="Mata Vicente J."/>
            <person name="Ng E."/>
            <person name="Nedjari H."/>
            <person name="Nordsiek G."/>
            <person name="Novella S."/>
            <person name="de Pablos B."/>
            <person name="Perez-Diaz J.-C."/>
            <person name="Purcell R."/>
            <person name="Remmel B."/>
            <person name="Rose M."/>
            <person name="Schlueter T."/>
            <person name="Simoes N."/>
            <person name="Tierrez A."/>
            <person name="Vazquez-Boland J.-A."/>
            <person name="Voss H."/>
            <person name="Wehland J."/>
            <person name="Cossart P."/>
        </authorList>
    </citation>
    <scope>NUCLEOTIDE SEQUENCE [LARGE SCALE GENOMIC DNA]</scope>
    <source>
        <strain>ATCC BAA-680 / CLIP 11262</strain>
    </source>
</reference>
<keyword id="KW-1003">Cell membrane</keyword>
<keyword id="KW-0472">Membrane</keyword>
<keyword id="KW-0762">Sugar transport</keyword>
<keyword id="KW-0812">Transmembrane</keyword>
<keyword id="KW-1133">Transmembrane helix</keyword>
<keyword id="KW-0813">Transport</keyword>
<evidence type="ECO:0000255" key="1"/>
<evidence type="ECO:0000305" key="2"/>
<name>Y444_LISIN</name>
<organism>
    <name type="scientific">Listeria innocua serovar 6a (strain ATCC BAA-680 / CLIP 11262)</name>
    <dbReference type="NCBI Taxonomy" id="272626"/>
    <lineage>
        <taxon>Bacteria</taxon>
        <taxon>Bacillati</taxon>
        <taxon>Bacillota</taxon>
        <taxon>Bacilli</taxon>
        <taxon>Bacillales</taxon>
        <taxon>Listeriaceae</taxon>
        <taxon>Listeria</taxon>
    </lineage>
</organism>
<gene>
    <name type="ordered locus">lin0444</name>
</gene>